<dbReference type="EC" id="6.5.1.2" evidence="1"/>
<dbReference type="EMBL" id="CP000813">
    <property type="protein sequence ID" value="ABV61318.1"/>
    <property type="molecule type" value="Genomic_DNA"/>
</dbReference>
<dbReference type="RefSeq" id="WP_012009166.1">
    <property type="nucleotide sequence ID" value="NC_009848.4"/>
</dbReference>
<dbReference type="SMR" id="A8FAQ1"/>
<dbReference type="STRING" id="315750.BPUM_0626"/>
<dbReference type="GeneID" id="5619874"/>
<dbReference type="KEGG" id="bpu:BPUM_0626"/>
<dbReference type="eggNOG" id="COG0272">
    <property type="taxonomic scope" value="Bacteria"/>
</dbReference>
<dbReference type="HOGENOM" id="CLU_007764_2_1_9"/>
<dbReference type="OrthoDB" id="9759736at2"/>
<dbReference type="Proteomes" id="UP000001355">
    <property type="component" value="Chromosome"/>
</dbReference>
<dbReference type="GO" id="GO:0005829">
    <property type="term" value="C:cytosol"/>
    <property type="evidence" value="ECO:0007669"/>
    <property type="project" value="TreeGrafter"/>
</dbReference>
<dbReference type="GO" id="GO:0003677">
    <property type="term" value="F:DNA binding"/>
    <property type="evidence" value="ECO:0007669"/>
    <property type="project" value="InterPro"/>
</dbReference>
<dbReference type="GO" id="GO:0003911">
    <property type="term" value="F:DNA ligase (NAD+) activity"/>
    <property type="evidence" value="ECO:0007669"/>
    <property type="project" value="UniProtKB-UniRule"/>
</dbReference>
<dbReference type="GO" id="GO:0046872">
    <property type="term" value="F:metal ion binding"/>
    <property type="evidence" value="ECO:0007669"/>
    <property type="project" value="UniProtKB-KW"/>
</dbReference>
<dbReference type="GO" id="GO:0006281">
    <property type="term" value="P:DNA repair"/>
    <property type="evidence" value="ECO:0007669"/>
    <property type="project" value="UniProtKB-KW"/>
</dbReference>
<dbReference type="GO" id="GO:0006260">
    <property type="term" value="P:DNA replication"/>
    <property type="evidence" value="ECO:0007669"/>
    <property type="project" value="UniProtKB-KW"/>
</dbReference>
<dbReference type="CDD" id="cd17748">
    <property type="entry name" value="BRCT_DNA_ligase_like"/>
    <property type="match status" value="1"/>
</dbReference>
<dbReference type="CDD" id="cd00114">
    <property type="entry name" value="LIGANc"/>
    <property type="match status" value="1"/>
</dbReference>
<dbReference type="FunFam" id="1.10.150.20:FF:000006">
    <property type="entry name" value="DNA ligase"/>
    <property type="match status" value="1"/>
</dbReference>
<dbReference type="FunFam" id="1.10.150.20:FF:000007">
    <property type="entry name" value="DNA ligase"/>
    <property type="match status" value="1"/>
</dbReference>
<dbReference type="FunFam" id="1.10.287.610:FF:000002">
    <property type="entry name" value="DNA ligase"/>
    <property type="match status" value="1"/>
</dbReference>
<dbReference type="FunFam" id="2.40.50.140:FF:000012">
    <property type="entry name" value="DNA ligase"/>
    <property type="match status" value="1"/>
</dbReference>
<dbReference type="FunFam" id="3.30.470.30:FF:000001">
    <property type="entry name" value="DNA ligase"/>
    <property type="match status" value="1"/>
</dbReference>
<dbReference type="FunFam" id="3.40.50.10190:FF:000026">
    <property type="entry name" value="DNA ligase"/>
    <property type="match status" value="1"/>
</dbReference>
<dbReference type="FunFam" id="6.20.10.30:FF:000002">
    <property type="entry name" value="DNA ligase"/>
    <property type="match status" value="1"/>
</dbReference>
<dbReference type="Gene3D" id="6.20.10.30">
    <property type="match status" value="1"/>
</dbReference>
<dbReference type="Gene3D" id="1.10.150.20">
    <property type="entry name" value="5' to 3' exonuclease, C-terminal subdomain"/>
    <property type="match status" value="2"/>
</dbReference>
<dbReference type="Gene3D" id="3.40.50.10190">
    <property type="entry name" value="BRCT domain"/>
    <property type="match status" value="1"/>
</dbReference>
<dbReference type="Gene3D" id="3.30.470.30">
    <property type="entry name" value="DNA ligase/mRNA capping enzyme"/>
    <property type="match status" value="1"/>
</dbReference>
<dbReference type="Gene3D" id="1.10.287.610">
    <property type="entry name" value="Helix hairpin bin"/>
    <property type="match status" value="1"/>
</dbReference>
<dbReference type="Gene3D" id="2.40.50.140">
    <property type="entry name" value="Nucleic acid-binding proteins"/>
    <property type="match status" value="1"/>
</dbReference>
<dbReference type="HAMAP" id="MF_01588">
    <property type="entry name" value="DNA_ligase_A"/>
    <property type="match status" value="1"/>
</dbReference>
<dbReference type="InterPro" id="IPR001357">
    <property type="entry name" value="BRCT_dom"/>
</dbReference>
<dbReference type="InterPro" id="IPR036420">
    <property type="entry name" value="BRCT_dom_sf"/>
</dbReference>
<dbReference type="InterPro" id="IPR041663">
    <property type="entry name" value="DisA/LigA_HHH"/>
</dbReference>
<dbReference type="InterPro" id="IPR001679">
    <property type="entry name" value="DNA_ligase"/>
</dbReference>
<dbReference type="InterPro" id="IPR018239">
    <property type="entry name" value="DNA_ligase_AS"/>
</dbReference>
<dbReference type="InterPro" id="IPR033136">
    <property type="entry name" value="DNA_ligase_CS"/>
</dbReference>
<dbReference type="InterPro" id="IPR013839">
    <property type="entry name" value="DNAligase_adenylation"/>
</dbReference>
<dbReference type="InterPro" id="IPR013840">
    <property type="entry name" value="DNAligase_N"/>
</dbReference>
<dbReference type="InterPro" id="IPR003583">
    <property type="entry name" value="Hlx-hairpin-Hlx_DNA-bd_motif"/>
</dbReference>
<dbReference type="InterPro" id="IPR012340">
    <property type="entry name" value="NA-bd_OB-fold"/>
</dbReference>
<dbReference type="InterPro" id="IPR004150">
    <property type="entry name" value="NAD_DNA_ligase_OB"/>
</dbReference>
<dbReference type="InterPro" id="IPR010994">
    <property type="entry name" value="RuvA_2-like"/>
</dbReference>
<dbReference type="InterPro" id="IPR004149">
    <property type="entry name" value="Znf_DNAligase_C4"/>
</dbReference>
<dbReference type="NCBIfam" id="TIGR00575">
    <property type="entry name" value="dnlj"/>
    <property type="match status" value="1"/>
</dbReference>
<dbReference type="NCBIfam" id="NF005932">
    <property type="entry name" value="PRK07956.1"/>
    <property type="match status" value="1"/>
</dbReference>
<dbReference type="PANTHER" id="PTHR23389">
    <property type="entry name" value="CHROMOSOME TRANSMISSION FIDELITY FACTOR 18"/>
    <property type="match status" value="1"/>
</dbReference>
<dbReference type="PANTHER" id="PTHR23389:SF9">
    <property type="entry name" value="DNA LIGASE"/>
    <property type="match status" value="1"/>
</dbReference>
<dbReference type="Pfam" id="PF00533">
    <property type="entry name" value="BRCT"/>
    <property type="match status" value="1"/>
</dbReference>
<dbReference type="Pfam" id="PF01653">
    <property type="entry name" value="DNA_ligase_aden"/>
    <property type="match status" value="1"/>
</dbReference>
<dbReference type="Pfam" id="PF03120">
    <property type="entry name" value="DNA_ligase_OB"/>
    <property type="match status" value="1"/>
</dbReference>
<dbReference type="Pfam" id="PF03119">
    <property type="entry name" value="DNA_ligase_ZBD"/>
    <property type="match status" value="1"/>
</dbReference>
<dbReference type="Pfam" id="PF12826">
    <property type="entry name" value="HHH_2"/>
    <property type="match status" value="1"/>
</dbReference>
<dbReference type="Pfam" id="PF14520">
    <property type="entry name" value="HHH_5"/>
    <property type="match status" value="1"/>
</dbReference>
<dbReference type="PIRSF" id="PIRSF001604">
    <property type="entry name" value="LigA"/>
    <property type="match status" value="1"/>
</dbReference>
<dbReference type="SMART" id="SM00292">
    <property type="entry name" value="BRCT"/>
    <property type="match status" value="1"/>
</dbReference>
<dbReference type="SMART" id="SM00278">
    <property type="entry name" value="HhH1"/>
    <property type="match status" value="3"/>
</dbReference>
<dbReference type="SMART" id="SM00532">
    <property type="entry name" value="LIGANc"/>
    <property type="match status" value="1"/>
</dbReference>
<dbReference type="SUPFAM" id="SSF52113">
    <property type="entry name" value="BRCT domain"/>
    <property type="match status" value="1"/>
</dbReference>
<dbReference type="SUPFAM" id="SSF56091">
    <property type="entry name" value="DNA ligase/mRNA capping enzyme, catalytic domain"/>
    <property type="match status" value="1"/>
</dbReference>
<dbReference type="SUPFAM" id="SSF50249">
    <property type="entry name" value="Nucleic acid-binding proteins"/>
    <property type="match status" value="1"/>
</dbReference>
<dbReference type="SUPFAM" id="SSF47781">
    <property type="entry name" value="RuvA domain 2-like"/>
    <property type="match status" value="1"/>
</dbReference>
<dbReference type="PROSITE" id="PS50172">
    <property type="entry name" value="BRCT"/>
    <property type="match status" value="1"/>
</dbReference>
<dbReference type="PROSITE" id="PS01055">
    <property type="entry name" value="DNA_LIGASE_N1"/>
    <property type="match status" value="1"/>
</dbReference>
<dbReference type="PROSITE" id="PS01056">
    <property type="entry name" value="DNA_LIGASE_N2"/>
    <property type="match status" value="1"/>
</dbReference>
<comment type="function">
    <text evidence="1">DNA ligase that catalyzes the formation of phosphodiester linkages between 5'-phosphoryl and 3'-hydroxyl groups in double-stranded DNA using NAD as a coenzyme and as the energy source for the reaction. It is essential for DNA replication and repair of damaged DNA.</text>
</comment>
<comment type="catalytic activity">
    <reaction evidence="1">
        <text>NAD(+) + (deoxyribonucleotide)n-3'-hydroxyl + 5'-phospho-(deoxyribonucleotide)m = (deoxyribonucleotide)n+m + AMP + beta-nicotinamide D-nucleotide.</text>
        <dbReference type="EC" id="6.5.1.2"/>
    </reaction>
</comment>
<comment type="cofactor">
    <cofactor evidence="1">
        <name>Mg(2+)</name>
        <dbReference type="ChEBI" id="CHEBI:18420"/>
    </cofactor>
    <cofactor evidence="1">
        <name>Mn(2+)</name>
        <dbReference type="ChEBI" id="CHEBI:29035"/>
    </cofactor>
</comment>
<comment type="similarity">
    <text evidence="1">Belongs to the NAD-dependent DNA ligase family. LigA subfamily.</text>
</comment>
<accession>A8FAQ1</accession>
<organism>
    <name type="scientific">Bacillus pumilus (strain SAFR-032)</name>
    <dbReference type="NCBI Taxonomy" id="315750"/>
    <lineage>
        <taxon>Bacteria</taxon>
        <taxon>Bacillati</taxon>
        <taxon>Bacillota</taxon>
        <taxon>Bacilli</taxon>
        <taxon>Bacillales</taxon>
        <taxon>Bacillaceae</taxon>
        <taxon>Bacillus</taxon>
    </lineage>
</organism>
<gene>
    <name evidence="1" type="primary">ligA</name>
    <name type="ordered locus">BPUM_0626</name>
</gene>
<reference key="1">
    <citation type="journal article" date="2007" name="PLoS ONE">
        <title>Paradoxical DNA repair and peroxide resistance gene conservation in Bacillus pumilus SAFR-032.</title>
        <authorList>
            <person name="Gioia J."/>
            <person name="Yerrapragada S."/>
            <person name="Qin X."/>
            <person name="Jiang H."/>
            <person name="Igboeli O.C."/>
            <person name="Muzny D."/>
            <person name="Dugan-Rocha S."/>
            <person name="Ding Y."/>
            <person name="Hawes A."/>
            <person name="Liu W."/>
            <person name="Perez L."/>
            <person name="Kovar C."/>
            <person name="Dinh H."/>
            <person name="Lee S."/>
            <person name="Nazareth L."/>
            <person name="Blyth P."/>
            <person name="Holder M."/>
            <person name="Buhay C."/>
            <person name="Tirumalai M.R."/>
            <person name="Liu Y."/>
            <person name="Dasgupta I."/>
            <person name="Bokhetache L."/>
            <person name="Fujita M."/>
            <person name="Karouia F."/>
            <person name="Eswara Moorthy P."/>
            <person name="Siefert J."/>
            <person name="Uzman A."/>
            <person name="Buzumbo P."/>
            <person name="Verma A."/>
            <person name="Zwiya H."/>
            <person name="McWilliams B.D."/>
            <person name="Olowu A."/>
            <person name="Clinkenbeard K.D."/>
            <person name="Newcombe D."/>
            <person name="Golebiewski L."/>
            <person name="Petrosino J.F."/>
            <person name="Nicholson W.L."/>
            <person name="Fox G.E."/>
            <person name="Venkateswaran K."/>
            <person name="Highlander S.K."/>
            <person name="Weinstock G.M."/>
        </authorList>
    </citation>
    <scope>NUCLEOTIDE SEQUENCE [LARGE SCALE GENOMIC DNA]</scope>
    <source>
        <strain>SAFR-032</strain>
    </source>
</reference>
<keyword id="KW-0227">DNA damage</keyword>
<keyword id="KW-0234">DNA repair</keyword>
<keyword id="KW-0235">DNA replication</keyword>
<keyword id="KW-0436">Ligase</keyword>
<keyword id="KW-0460">Magnesium</keyword>
<keyword id="KW-0464">Manganese</keyword>
<keyword id="KW-0479">Metal-binding</keyword>
<keyword id="KW-0520">NAD</keyword>
<keyword id="KW-0862">Zinc</keyword>
<protein>
    <recommendedName>
        <fullName evidence="1">DNA ligase</fullName>
        <ecNumber evidence="1">6.5.1.2</ecNumber>
    </recommendedName>
    <alternativeName>
        <fullName evidence="1">Polydeoxyribonucleotide synthase [NAD(+)]</fullName>
    </alternativeName>
</protein>
<evidence type="ECO:0000255" key="1">
    <source>
        <dbReference type="HAMAP-Rule" id="MF_01588"/>
    </source>
</evidence>
<feature type="chain" id="PRO_0000340328" description="DNA ligase">
    <location>
        <begin position="1"/>
        <end position="668"/>
    </location>
</feature>
<feature type="domain" description="BRCT" evidence="1">
    <location>
        <begin position="590"/>
        <end position="668"/>
    </location>
</feature>
<feature type="active site" description="N6-AMP-lysine intermediate" evidence="1">
    <location>
        <position position="115"/>
    </location>
</feature>
<feature type="binding site" evidence="1">
    <location>
        <begin position="34"/>
        <end position="38"/>
    </location>
    <ligand>
        <name>NAD(+)</name>
        <dbReference type="ChEBI" id="CHEBI:57540"/>
    </ligand>
</feature>
<feature type="binding site" evidence="1">
    <location>
        <begin position="83"/>
        <end position="84"/>
    </location>
    <ligand>
        <name>NAD(+)</name>
        <dbReference type="ChEBI" id="CHEBI:57540"/>
    </ligand>
</feature>
<feature type="binding site" evidence="1">
    <location>
        <position position="113"/>
    </location>
    <ligand>
        <name>NAD(+)</name>
        <dbReference type="ChEBI" id="CHEBI:57540"/>
    </ligand>
</feature>
<feature type="binding site" evidence="1">
    <location>
        <position position="136"/>
    </location>
    <ligand>
        <name>NAD(+)</name>
        <dbReference type="ChEBI" id="CHEBI:57540"/>
    </ligand>
</feature>
<feature type="binding site" evidence="1">
    <location>
        <position position="170"/>
    </location>
    <ligand>
        <name>NAD(+)</name>
        <dbReference type="ChEBI" id="CHEBI:57540"/>
    </ligand>
</feature>
<feature type="binding site" evidence="1">
    <location>
        <position position="286"/>
    </location>
    <ligand>
        <name>NAD(+)</name>
        <dbReference type="ChEBI" id="CHEBI:57540"/>
    </ligand>
</feature>
<feature type="binding site" evidence="1">
    <location>
        <position position="310"/>
    </location>
    <ligand>
        <name>NAD(+)</name>
        <dbReference type="ChEBI" id="CHEBI:57540"/>
    </ligand>
</feature>
<feature type="binding site" evidence="1">
    <location>
        <position position="404"/>
    </location>
    <ligand>
        <name>Zn(2+)</name>
        <dbReference type="ChEBI" id="CHEBI:29105"/>
    </ligand>
</feature>
<feature type="binding site" evidence="1">
    <location>
        <position position="407"/>
    </location>
    <ligand>
        <name>Zn(2+)</name>
        <dbReference type="ChEBI" id="CHEBI:29105"/>
    </ligand>
</feature>
<feature type="binding site" evidence="1">
    <location>
        <position position="422"/>
    </location>
    <ligand>
        <name>Zn(2+)</name>
        <dbReference type="ChEBI" id="CHEBI:29105"/>
    </ligand>
</feature>
<feature type="binding site" evidence="1">
    <location>
        <position position="427"/>
    </location>
    <ligand>
        <name>Zn(2+)</name>
        <dbReference type="ChEBI" id="CHEBI:29105"/>
    </ligand>
</feature>
<name>DNLJ_BACP2</name>
<sequence length="668" mass="74781">MDKEAAKRRIEELHEILNQYNYEYHTLDRPSVPDAEYDARMRELISLEEEHPDLKAADSPSQRVGGAVLDAFQKVRHGTPMLSLGNAFNEQDLLDFDRRVRQAVGDDIAYNVELKIDGLAVSLRYENGVFVRGATRGDGTTGEDITENLKTIRSIPLKIKRPLSIEVRGEAFMPKPSFEALNEKRLQNEEEPFANPRNAAAGSLRQLDTKIAAKRNLDIFVYSIAELDEIGVESQSEGLDLLDELGFKTNKERRTCQTIEEVIELIETLKTKRADFSYEIDGIVIKVDSLAQQEELGFTAKSPRWAVAYKFPAEEVVTKLLDIELSVGRTGVITPTAILEPVKVAGTTVQRASLHNEDLIKEKDIRLLDQVIVKKAGDIIPEVAGVLIDQRTGEEKPFHMPTECPECHSELVRIEGEVALRCINPECPAQIREGLIHFVSRNAMNIDGLGERVITQLFKEQLVSRVSDLYRLTKEELIQLERMGEKSVENLLRSIEQSKENSLERLLFGLGIRFIGSKAAKTLALHFGDIDQLKQATKEQLLEVDEIGEKMADAVVTYFEKEEILNLLNELKELGVNMTYTGPKPVKVEESDSYFAGKTIVLTGKLEEMARNDAKAAIEALGGKLAGSVSKKTDLVIAGEAAGSKLTKAEELNIEIWDEVKMLEELKK</sequence>
<proteinExistence type="inferred from homology"/>